<feature type="chain" id="PRO_0000392803" description="Dermonecrotic toxin LdSicTox-alphaIB3av">
    <location>
        <begin position="1" status="less than"/>
        <end position="273"/>
    </location>
</feature>
<feature type="active site" evidence="5">
    <location>
        <position position="5"/>
    </location>
</feature>
<feature type="active site" description="Nucleophile" evidence="5">
    <location>
        <position position="41"/>
    </location>
</feature>
<feature type="binding site" evidence="5">
    <location>
        <position position="25"/>
    </location>
    <ligand>
        <name>Mg(2+)</name>
        <dbReference type="ChEBI" id="CHEBI:18420"/>
    </ligand>
</feature>
<feature type="binding site" evidence="5">
    <location>
        <position position="27"/>
    </location>
    <ligand>
        <name>Mg(2+)</name>
        <dbReference type="ChEBI" id="CHEBI:18420"/>
    </ligand>
</feature>
<feature type="binding site" evidence="5">
    <location>
        <position position="85"/>
    </location>
    <ligand>
        <name>Mg(2+)</name>
        <dbReference type="ChEBI" id="CHEBI:18420"/>
    </ligand>
</feature>
<feature type="disulfide bond" evidence="3">
    <location>
        <begin position="45"/>
        <end position="51"/>
    </location>
</feature>
<feature type="disulfide bond" evidence="3">
    <location>
        <begin position="47"/>
        <end position="190"/>
    </location>
</feature>
<feature type="non-terminal residue">
    <location>
        <position position="1"/>
    </location>
</feature>
<name>A1MA5_LOXDE</name>
<protein>
    <recommendedName>
        <fullName evidence="6">Dermonecrotic toxin LdSicTox-alphaIB3av</fullName>
        <ecNumber evidence="4">4.6.1.-</ecNumber>
    </recommendedName>
    <alternativeName>
        <fullName>Phospholipase D</fullName>
        <shortName>PLD</shortName>
    </alternativeName>
    <alternativeName>
        <fullName>Sphingomyelin phosphodiesterase D</fullName>
        <shortName>SMD</shortName>
        <shortName>SMase D</shortName>
        <shortName>Sphingomyelinase D</shortName>
    </alternativeName>
</protein>
<dbReference type="EC" id="4.6.1.-" evidence="4"/>
<dbReference type="EMBL" id="FJ171414">
    <property type="protein sequence ID" value="ACN48910.1"/>
    <property type="molecule type" value="mRNA"/>
</dbReference>
<dbReference type="SMR" id="C0JAX9"/>
<dbReference type="GO" id="GO:0005576">
    <property type="term" value="C:extracellular region"/>
    <property type="evidence" value="ECO:0007669"/>
    <property type="project" value="UniProtKB-SubCell"/>
</dbReference>
<dbReference type="GO" id="GO:0016829">
    <property type="term" value="F:lyase activity"/>
    <property type="evidence" value="ECO:0007669"/>
    <property type="project" value="UniProtKB-KW"/>
</dbReference>
<dbReference type="GO" id="GO:0046872">
    <property type="term" value="F:metal ion binding"/>
    <property type="evidence" value="ECO:0007669"/>
    <property type="project" value="UniProtKB-KW"/>
</dbReference>
<dbReference type="GO" id="GO:0008081">
    <property type="term" value="F:phosphoric diester hydrolase activity"/>
    <property type="evidence" value="ECO:0007669"/>
    <property type="project" value="InterPro"/>
</dbReference>
<dbReference type="GO" id="GO:0090729">
    <property type="term" value="F:toxin activity"/>
    <property type="evidence" value="ECO:0007669"/>
    <property type="project" value="UniProtKB-KW"/>
</dbReference>
<dbReference type="GO" id="GO:0031640">
    <property type="term" value="P:killing of cells of another organism"/>
    <property type="evidence" value="ECO:0007669"/>
    <property type="project" value="UniProtKB-KW"/>
</dbReference>
<dbReference type="GO" id="GO:0016042">
    <property type="term" value="P:lipid catabolic process"/>
    <property type="evidence" value="ECO:0007669"/>
    <property type="project" value="UniProtKB-KW"/>
</dbReference>
<dbReference type="CDD" id="cd08576">
    <property type="entry name" value="GDPD_like_SMaseD_PLD"/>
    <property type="match status" value="1"/>
</dbReference>
<dbReference type="Gene3D" id="3.20.20.190">
    <property type="entry name" value="Phosphatidylinositol (PI) phosphodiesterase"/>
    <property type="match status" value="1"/>
</dbReference>
<dbReference type="InterPro" id="IPR017946">
    <property type="entry name" value="PLC-like_Pdiesterase_TIM-brl"/>
</dbReference>
<dbReference type="Pfam" id="PF13653">
    <property type="entry name" value="GDPD_2"/>
    <property type="match status" value="1"/>
</dbReference>
<dbReference type="SUPFAM" id="SSF51695">
    <property type="entry name" value="PLC-like phosphodiesterases"/>
    <property type="match status" value="1"/>
</dbReference>
<organism>
    <name type="scientific">Loxosceles deserta</name>
    <name type="common">Desert recluse spider</name>
    <dbReference type="NCBI Taxonomy" id="424440"/>
    <lineage>
        <taxon>Eukaryota</taxon>
        <taxon>Metazoa</taxon>
        <taxon>Ecdysozoa</taxon>
        <taxon>Arthropoda</taxon>
        <taxon>Chelicerata</taxon>
        <taxon>Arachnida</taxon>
        <taxon>Araneae</taxon>
        <taxon>Araneomorphae</taxon>
        <taxon>Haplogynae</taxon>
        <taxon>Scytodoidea</taxon>
        <taxon>Sicariidae</taxon>
        <taxon>Loxosceles</taxon>
    </lineage>
</organism>
<comment type="function">
    <text evidence="1 3">Dermonecrotic toxins cleave the phosphodiester linkage between the phosphate and headgroup of certain phospholipids (sphingolipid and lysolipid substrates), forming an alcohol (often choline) and a cyclic phosphate (By similarity). This toxin acts on sphingomyelin (SM) (By similarity). It may also act on ceramide phosphoethanolamine (CPE), lysophosphatidylcholine (LPC) and lysophosphatidylethanolamine (LPE), but not on lysophosphatidylserine (LPS), and lysophosphatidylglycerol (LPG) (By similarity). It acts by transphosphatidylation, releasing exclusively cyclic phosphate products as second products (By similarity). Induces dermonecrosis, hemolysis, increased vascular permeability, edema, inflammatory response, and platelet aggregation (By similarity).</text>
</comment>
<comment type="catalytic activity">
    <reaction evidence="1">
        <text>an N-(acyl)-sphingosylphosphocholine = an N-(acyl)-sphingosyl-1,3-cyclic phosphate + choline</text>
        <dbReference type="Rhea" id="RHEA:60652"/>
        <dbReference type="ChEBI" id="CHEBI:15354"/>
        <dbReference type="ChEBI" id="CHEBI:64583"/>
        <dbReference type="ChEBI" id="CHEBI:143892"/>
    </reaction>
</comment>
<comment type="catalytic activity">
    <reaction evidence="1">
        <text>an N-(acyl)-sphingosylphosphoethanolamine = an N-(acyl)-sphingosyl-1,3-cyclic phosphate + ethanolamine</text>
        <dbReference type="Rhea" id="RHEA:60648"/>
        <dbReference type="ChEBI" id="CHEBI:57603"/>
        <dbReference type="ChEBI" id="CHEBI:143891"/>
        <dbReference type="ChEBI" id="CHEBI:143892"/>
    </reaction>
</comment>
<comment type="catalytic activity">
    <reaction evidence="1">
        <text>a 1-acyl-sn-glycero-3-phosphocholine = a 1-acyl-sn-glycero-2,3-cyclic phosphate + choline</text>
        <dbReference type="Rhea" id="RHEA:60700"/>
        <dbReference type="ChEBI" id="CHEBI:15354"/>
        <dbReference type="ChEBI" id="CHEBI:58168"/>
        <dbReference type="ChEBI" id="CHEBI:143947"/>
    </reaction>
</comment>
<comment type="catalytic activity">
    <reaction evidence="1">
        <text>a 1-acyl-sn-glycero-3-phosphoethanolamine = a 1-acyl-sn-glycero-2,3-cyclic phosphate + ethanolamine</text>
        <dbReference type="Rhea" id="RHEA:60704"/>
        <dbReference type="ChEBI" id="CHEBI:57603"/>
        <dbReference type="ChEBI" id="CHEBI:64381"/>
        <dbReference type="ChEBI" id="CHEBI:143947"/>
    </reaction>
</comment>
<comment type="cofactor">
    <cofactor evidence="5">
        <name>Mg(2+)</name>
        <dbReference type="ChEBI" id="CHEBI:18420"/>
    </cofactor>
    <text evidence="5">Binds 1 Mg(2+) ion per subunit.</text>
</comment>
<comment type="subcellular location">
    <subcellularLocation>
        <location evidence="8">Secreted</location>
    </subcellularLocation>
</comment>
<comment type="tissue specificity">
    <text evidence="8">Expressed by the venom gland.</text>
</comment>
<comment type="similarity">
    <text evidence="7">Belongs to the arthropod phospholipase D family. Class II subfamily.</text>
</comment>
<comment type="caution">
    <text evidence="1 2 4">The most common activity assay for dermonecrotic toxins detects enzymatic activity by monitoring choline release from substrate. Liberation of choline from sphingomyelin (SM) or lysophosphatidylcholine (LPC) is commonly assumed to result from substrate hydrolysis, giving either ceramide-1-phosphate (C1P) or lysophosphatidic acid (LPA), respectively, as a second product. However, two studies from Lajoie and colleagues (2013 and 2015) report the observation of exclusive formation of cyclic phosphate products as second products, resulting from intramolecular transphosphatidylation. Cyclic phosphates have vastly different biological properties from their monoester counterparts, and they may be relevant to the pathology of brown spider envenomation.</text>
</comment>
<proteinExistence type="evidence at transcript level"/>
<accession>C0JAX9</accession>
<evidence type="ECO:0000250" key="1">
    <source>
        <dbReference type="UniProtKB" id="A0A0D4WTV1"/>
    </source>
</evidence>
<evidence type="ECO:0000250" key="2">
    <source>
        <dbReference type="UniProtKB" id="A0A0D4WV12"/>
    </source>
</evidence>
<evidence type="ECO:0000250" key="3">
    <source>
        <dbReference type="UniProtKB" id="P0CE80"/>
    </source>
</evidence>
<evidence type="ECO:0000250" key="4">
    <source>
        <dbReference type="UniProtKB" id="Q4ZFU2"/>
    </source>
</evidence>
<evidence type="ECO:0000250" key="5">
    <source>
        <dbReference type="UniProtKB" id="Q8I914"/>
    </source>
</evidence>
<evidence type="ECO:0000303" key="6">
    <source>
    </source>
</evidence>
<evidence type="ECO:0000305" key="7"/>
<evidence type="ECO:0000305" key="8">
    <source>
    </source>
</evidence>
<reference key="1">
    <citation type="journal article" date="2009" name="Mol. Biol. Evol.">
        <title>Molecular evolution, functional variation, and proposed nomenclature of the gene family that includes sphingomyelinase D in sicariid spider venoms.</title>
        <authorList>
            <person name="Binford G.J."/>
            <person name="Bodner M.R."/>
            <person name="Cordes M.H."/>
            <person name="Baldwin K.L."/>
            <person name="Rynerson M.R."/>
            <person name="Burns S.N."/>
            <person name="Zobel-Thropp P.A."/>
        </authorList>
    </citation>
    <scope>NUCLEOTIDE SEQUENCE [MRNA]</scope>
    <scope>NOMENCLATURE</scope>
    <source>
        <tissue>Venom gland</tissue>
    </source>
</reference>
<keyword id="KW-0204">Cytolysis</keyword>
<keyword id="KW-1061">Dermonecrotic toxin</keyword>
<keyword id="KW-1015">Disulfide bond</keyword>
<keyword id="KW-0354">Hemolysis</keyword>
<keyword id="KW-0442">Lipid degradation</keyword>
<keyword id="KW-0443">Lipid metabolism</keyword>
<keyword id="KW-0456">Lyase</keyword>
<keyword id="KW-0460">Magnesium</keyword>
<keyword id="KW-0479">Metal-binding</keyword>
<keyword id="KW-0964">Secreted</keyword>
<keyword id="KW-0800">Toxin</keyword>
<sequence length="273" mass="30379">WIMGHMVNAIAQIDELVNLGANSIETDVSFDKNANPEYTYHGIPCDCGRTCTKSEKFNVFLQGLQKATTPGDSKYQEKLVLVVFDLKSSSLYDNQASDAGKKLAKSLLQNYWKNGNNGGRAYIVLSIPNLAHYKLITGFKETLKTEGHPELMEKVGYDFSGNDDIDQVAKAYKKAGVTGHVWQSDGITNCLPRGLDRVKQAVANRDSSNGFINKVYYWTVDKRSTTRGALDAGVDGIMTNYPDVIADVLSESAYKSKFRIATYEDNPWETFKN</sequence>